<sequence length="160" mass="18241">MMERFEKIEMKIPAKAEYVAIIRLTMAGVANRMGFAYDDIEDMKIAISEACTNIVQHAYKEDVGEIAIVFGLYENRLEIMVADNGVSFDFNNLRSKVGPYDISKPVEHLPENGLGLYLINTLMDDIQIMHDEGMTVLMTKYIQREQVENDGNPISTYESY</sequence>
<evidence type="ECO:0000255" key="1">
    <source>
        <dbReference type="HAMAP-Rule" id="MF_00638"/>
    </source>
</evidence>
<name>RSBW_BACAA</name>
<dbReference type="EC" id="2.7.11.1" evidence="1"/>
<dbReference type="EMBL" id="CP001598">
    <property type="protein sequence ID" value="ACQ49382.1"/>
    <property type="molecule type" value="Genomic_DNA"/>
</dbReference>
<dbReference type="RefSeq" id="WP_000970578.1">
    <property type="nucleotide sequence ID" value="NC_012659.1"/>
</dbReference>
<dbReference type="SMR" id="C3P2P9"/>
<dbReference type="GeneID" id="45021033"/>
<dbReference type="KEGG" id="bai:BAA_1085"/>
<dbReference type="HOGENOM" id="CLU_090336_11_1_9"/>
<dbReference type="GO" id="GO:0005524">
    <property type="term" value="F:ATP binding"/>
    <property type="evidence" value="ECO:0007669"/>
    <property type="project" value="UniProtKB-KW"/>
</dbReference>
<dbReference type="GO" id="GO:0106310">
    <property type="term" value="F:protein serine kinase activity"/>
    <property type="evidence" value="ECO:0007669"/>
    <property type="project" value="RHEA"/>
</dbReference>
<dbReference type="GO" id="GO:0004674">
    <property type="term" value="F:protein serine/threonine kinase activity"/>
    <property type="evidence" value="ECO:0007669"/>
    <property type="project" value="UniProtKB-KW"/>
</dbReference>
<dbReference type="GO" id="GO:0016989">
    <property type="term" value="F:sigma factor antagonist activity"/>
    <property type="evidence" value="ECO:0007669"/>
    <property type="project" value="InterPro"/>
</dbReference>
<dbReference type="CDD" id="cd16936">
    <property type="entry name" value="HATPase_RsbW-like"/>
    <property type="match status" value="1"/>
</dbReference>
<dbReference type="FunFam" id="3.30.565.10:FF:000026">
    <property type="entry name" value="Serine-protein kinase RsbW"/>
    <property type="match status" value="1"/>
</dbReference>
<dbReference type="Gene3D" id="3.30.565.10">
    <property type="entry name" value="Histidine kinase-like ATPase, C-terminal domain"/>
    <property type="match status" value="1"/>
</dbReference>
<dbReference type="HAMAP" id="MF_00638">
    <property type="entry name" value="Anti_sigma_B"/>
    <property type="match status" value="1"/>
</dbReference>
<dbReference type="InterPro" id="IPR050267">
    <property type="entry name" value="Anti-sigma-factor_SerPK"/>
</dbReference>
<dbReference type="InterPro" id="IPR036890">
    <property type="entry name" value="HATPase_C_sf"/>
</dbReference>
<dbReference type="InterPro" id="IPR010193">
    <property type="entry name" value="RsbW"/>
</dbReference>
<dbReference type="NCBIfam" id="NF003144">
    <property type="entry name" value="PRK04069.1"/>
    <property type="match status" value="1"/>
</dbReference>
<dbReference type="NCBIfam" id="TIGR01924">
    <property type="entry name" value="rsbW_low_gc"/>
    <property type="match status" value="1"/>
</dbReference>
<dbReference type="PANTHER" id="PTHR35526">
    <property type="entry name" value="ANTI-SIGMA-F FACTOR RSBW-RELATED"/>
    <property type="match status" value="1"/>
</dbReference>
<dbReference type="PANTHER" id="PTHR35526:SF9">
    <property type="entry name" value="SERINE-PROTEIN KINASE RSBW"/>
    <property type="match status" value="1"/>
</dbReference>
<dbReference type="Pfam" id="PF13581">
    <property type="entry name" value="HATPase_c_2"/>
    <property type="match status" value="1"/>
</dbReference>
<dbReference type="SUPFAM" id="SSF55874">
    <property type="entry name" value="ATPase domain of HSP90 chaperone/DNA topoisomerase II/histidine kinase"/>
    <property type="match status" value="1"/>
</dbReference>
<feature type="chain" id="PRO_1000147384" description="Serine-protein kinase RsbW">
    <location>
        <begin position="1"/>
        <end position="160"/>
    </location>
</feature>
<protein>
    <recommendedName>
        <fullName evidence="1">Serine-protein kinase RsbW</fullName>
        <ecNumber evidence="1">2.7.11.1</ecNumber>
    </recommendedName>
    <alternativeName>
        <fullName evidence="1">Anti-sigma-B factor</fullName>
    </alternativeName>
    <alternativeName>
        <fullName evidence="1">Sigma-B negative effector RsbW</fullName>
    </alternativeName>
</protein>
<organism>
    <name type="scientific">Bacillus anthracis (strain A0248)</name>
    <dbReference type="NCBI Taxonomy" id="592021"/>
    <lineage>
        <taxon>Bacteria</taxon>
        <taxon>Bacillati</taxon>
        <taxon>Bacillota</taxon>
        <taxon>Bacilli</taxon>
        <taxon>Bacillales</taxon>
        <taxon>Bacillaceae</taxon>
        <taxon>Bacillus</taxon>
        <taxon>Bacillus cereus group</taxon>
    </lineage>
</organism>
<comment type="function">
    <text evidence="1">Negative regulator of sigma-B activity. Phosphorylates and inactivates its specific antagonist protein, RsbV. Upon phosphorylation of RsbV, RsbW is released and binds to sigma-B, thereby blocking its ability to form an RNA polymerase holoenzyme (E-sigma-B).</text>
</comment>
<comment type="catalytic activity">
    <reaction evidence="1">
        <text>L-seryl-[protein] + ATP = O-phospho-L-seryl-[protein] + ADP + H(+)</text>
        <dbReference type="Rhea" id="RHEA:17989"/>
        <dbReference type="Rhea" id="RHEA-COMP:9863"/>
        <dbReference type="Rhea" id="RHEA-COMP:11604"/>
        <dbReference type="ChEBI" id="CHEBI:15378"/>
        <dbReference type="ChEBI" id="CHEBI:29999"/>
        <dbReference type="ChEBI" id="CHEBI:30616"/>
        <dbReference type="ChEBI" id="CHEBI:83421"/>
        <dbReference type="ChEBI" id="CHEBI:456216"/>
        <dbReference type="EC" id="2.7.11.1"/>
    </reaction>
</comment>
<comment type="catalytic activity">
    <reaction evidence="1">
        <text>L-threonyl-[protein] + ATP = O-phospho-L-threonyl-[protein] + ADP + H(+)</text>
        <dbReference type="Rhea" id="RHEA:46608"/>
        <dbReference type="Rhea" id="RHEA-COMP:11060"/>
        <dbReference type="Rhea" id="RHEA-COMP:11605"/>
        <dbReference type="ChEBI" id="CHEBI:15378"/>
        <dbReference type="ChEBI" id="CHEBI:30013"/>
        <dbReference type="ChEBI" id="CHEBI:30616"/>
        <dbReference type="ChEBI" id="CHEBI:61977"/>
        <dbReference type="ChEBI" id="CHEBI:456216"/>
        <dbReference type="EC" id="2.7.11.1"/>
    </reaction>
</comment>
<comment type="similarity">
    <text evidence="1">Belongs to the anti-sigma-factor family.</text>
</comment>
<accession>C3P2P9</accession>
<reference key="1">
    <citation type="submission" date="2009-04" db="EMBL/GenBank/DDBJ databases">
        <title>Genome sequence of Bacillus anthracis A0248.</title>
        <authorList>
            <person name="Dodson R.J."/>
            <person name="Munk A.C."/>
            <person name="Bruce D."/>
            <person name="Detter C."/>
            <person name="Tapia R."/>
            <person name="Sutton G."/>
            <person name="Sims D."/>
            <person name="Brettin T."/>
        </authorList>
    </citation>
    <scope>NUCLEOTIDE SEQUENCE [LARGE SCALE GENOMIC DNA]</scope>
    <source>
        <strain>A0248</strain>
    </source>
</reference>
<proteinExistence type="inferred from homology"/>
<keyword id="KW-0067">ATP-binding</keyword>
<keyword id="KW-0418">Kinase</keyword>
<keyword id="KW-0547">Nucleotide-binding</keyword>
<keyword id="KW-0723">Serine/threonine-protein kinase</keyword>
<keyword id="KW-0808">Transferase</keyword>
<gene>
    <name evidence="1" type="primary">rsbW</name>
    <name type="ordered locus">BAA_1085</name>
</gene>